<feature type="chain" id="PRO_0000090046" description="6-phosphogluconate dehydrogenase, decarboxylating">
    <location>
        <begin position="1"/>
        <end position="472"/>
    </location>
</feature>
<feature type="active site" description="Proton acceptor" evidence="2">
    <location>
        <position position="184"/>
    </location>
</feature>
<feature type="active site" description="Proton donor" evidence="2">
    <location>
        <position position="191"/>
    </location>
</feature>
<feature type="binding site" evidence="2">
    <location>
        <begin position="10"/>
        <end position="15"/>
    </location>
    <ligand>
        <name>NADP(+)</name>
        <dbReference type="ChEBI" id="CHEBI:58349"/>
    </ligand>
</feature>
<feature type="binding site" evidence="2">
    <location>
        <begin position="33"/>
        <end position="35"/>
    </location>
    <ligand>
        <name>NADP(+)</name>
        <dbReference type="ChEBI" id="CHEBI:58349"/>
    </ligand>
</feature>
<feature type="binding site" evidence="2">
    <location>
        <begin position="74"/>
        <end position="76"/>
    </location>
    <ligand>
        <name>NADP(+)</name>
        <dbReference type="ChEBI" id="CHEBI:58349"/>
    </ligand>
</feature>
<feature type="binding site" evidence="2">
    <location>
        <position position="102"/>
    </location>
    <ligand>
        <name>NADP(+)</name>
        <dbReference type="ChEBI" id="CHEBI:58349"/>
    </ligand>
</feature>
<feature type="binding site" description="in other chain" evidence="2">
    <location>
        <position position="102"/>
    </location>
    <ligand>
        <name>substrate</name>
        <note>ligand shared between dimeric partners</note>
    </ligand>
</feature>
<feature type="binding site" description="in other chain" evidence="2">
    <location>
        <begin position="128"/>
        <end position="130"/>
    </location>
    <ligand>
        <name>substrate</name>
        <note>ligand shared between dimeric partners</note>
    </ligand>
</feature>
<feature type="binding site" description="in other chain" evidence="2">
    <location>
        <begin position="187"/>
        <end position="188"/>
    </location>
    <ligand>
        <name>substrate</name>
        <note>ligand shared between dimeric partners</note>
    </ligand>
</feature>
<feature type="binding site" description="in other chain" evidence="2">
    <location>
        <position position="192"/>
    </location>
    <ligand>
        <name>substrate</name>
        <note>ligand shared between dimeric partners</note>
    </ligand>
</feature>
<feature type="binding site" description="in other chain" evidence="2">
    <location>
        <position position="262"/>
    </location>
    <ligand>
        <name>substrate</name>
        <note>ligand shared between dimeric partners</note>
    </ligand>
</feature>
<feature type="binding site" description="in other chain" evidence="2">
    <location>
        <position position="289"/>
    </location>
    <ligand>
        <name>substrate</name>
        <note>ligand shared between dimeric partners</note>
    </ligand>
</feature>
<feature type="binding site" evidence="2">
    <location>
        <position position="447"/>
    </location>
    <ligand>
        <name>substrate</name>
        <note>ligand shared between dimeric partners</note>
    </ligand>
</feature>
<feature type="binding site" evidence="2">
    <location>
        <position position="453"/>
    </location>
    <ligand>
        <name>substrate</name>
        <note>ligand shared between dimeric partners</note>
    </ligand>
</feature>
<feature type="sequence conflict" description="In Ref. 1; AAC12804." evidence="3" ref="1">
    <original>Y</original>
    <variation>F</variation>
    <location>
        <position position="43"/>
    </location>
</feature>
<feature type="strand" evidence="4">
    <location>
        <begin position="4"/>
        <end position="9"/>
    </location>
</feature>
<feature type="helix" evidence="4">
    <location>
        <begin position="13"/>
        <end position="24"/>
    </location>
</feature>
<feature type="strand" evidence="4">
    <location>
        <begin position="29"/>
        <end position="32"/>
    </location>
</feature>
<feature type="helix" evidence="4">
    <location>
        <begin position="36"/>
        <end position="45"/>
    </location>
</feature>
<feature type="turn" evidence="4">
    <location>
        <begin position="46"/>
        <end position="48"/>
    </location>
</feature>
<feature type="strand" evidence="4">
    <location>
        <begin position="51"/>
        <end position="53"/>
    </location>
</feature>
<feature type="helix" evidence="4">
    <location>
        <begin position="57"/>
        <end position="62"/>
    </location>
</feature>
<feature type="strand" evidence="4">
    <location>
        <begin position="69"/>
        <end position="72"/>
    </location>
</feature>
<feature type="helix" evidence="4">
    <location>
        <begin position="78"/>
        <end position="87"/>
    </location>
</feature>
<feature type="helix" evidence="4">
    <location>
        <begin position="88"/>
        <end position="90"/>
    </location>
</feature>
<feature type="strand" evidence="4">
    <location>
        <begin position="96"/>
        <end position="99"/>
    </location>
</feature>
<feature type="helix" evidence="4">
    <location>
        <begin position="105"/>
        <end position="114"/>
    </location>
</feature>
<feature type="turn" evidence="4">
    <location>
        <begin position="115"/>
        <end position="117"/>
    </location>
</feature>
<feature type="strand" evidence="4">
    <location>
        <begin position="121"/>
        <end position="127"/>
    </location>
</feature>
<feature type="helix" evidence="4">
    <location>
        <begin position="130"/>
        <end position="136"/>
    </location>
</feature>
<feature type="strand" evidence="4">
    <location>
        <begin position="140"/>
        <end position="144"/>
    </location>
</feature>
<feature type="helix" evidence="4">
    <location>
        <begin position="146"/>
        <end position="159"/>
    </location>
</feature>
<feature type="turn" evidence="4">
    <location>
        <begin position="164"/>
        <end position="166"/>
    </location>
</feature>
<feature type="strand" evidence="4">
    <location>
        <begin position="169"/>
        <end position="171"/>
    </location>
</feature>
<feature type="helix" evidence="4">
    <location>
        <begin position="179"/>
        <end position="207"/>
    </location>
</feature>
<feature type="helix" evidence="4">
    <location>
        <begin position="213"/>
        <end position="223"/>
    </location>
</feature>
<feature type="turn" evidence="4">
    <location>
        <begin position="224"/>
        <end position="228"/>
    </location>
</feature>
<feature type="helix" evidence="4">
    <location>
        <begin position="231"/>
        <end position="239"/>
    </location>
</feature>
<feature type="strand" evidence="4">
    <location>
        <begin position="245"/>
        <end position="250"/>
    </location>
</feature>
<feature type="helix" evidence="4">
    <location>
        <begin position="251"/>
        <end position="254"/>
    </location>
</feature>
<feature type="helix" evidence="4">
    <location>
        <begin position="264"/>
        <end position="275"/>
    </location>
</feature>
<feature type="helix" evidence="4">
    <location>
        <begin position="280"/>
        <end position="293"/>
    </location>
</feature>
<feature type="helix" evidence="4">
    <location>
        <begin position="295"/>
        <end position="304"/>
    </location>
</feature>
<feature type="helix" evidence="4">
    <location>
        <begin position="316"/>
        <end position="349"/>
    </location>
</feature>
<feature type="helix" evidence="4">
    <location>
        <begin position="355"/>
        <end position="361"/>
    </location>
</feature>
<feature type="strand" evidence="4">
    <location>
        <begin position="363"/>
        <end position="365"/>
    </location>
</feature>
<feature type="helix" evidence="4">
    <location>
        <begin position="373"/>
        <end position="382"/>
    </location>
</feature>
<feature type="helix" evidence="4">
    <location>
        <begin position="389"/>
        <end position="391"/>
    </location>
</feature>
<feature type="helix" evidence="4">
    <location>
        <begin position="393"/>
        <end position="416"/>
    </location>
</feature>
<feature type="helix" evidence="4">
    <location>
        <begin position="421"/>
        <end position="433"/>
    </location>
</feature>
<feature type="helix" evidence="4">
    <location>
        <begin position="440"/>
        <end position="451"/>
    </location>
</feature>
<feature type="strand" evidence="4">
    <location>
        <begin position="457"/>
        <end position="462"/>
    </location>
</feature>
<protein>
    <recommendedName>
        <fullName>6-phosphogluconate dehydrogenase, decarboxylating</fullName>
        <ecNumber>1.1.1.44</ecNumber>
    </recommendedName>
</protein>
<name>6PGD_LACLM</name>
<sequence length="472" mass="52460">MAQANFGVVGMAVMGKNLALNVESRGYTVAIYNRTTSKTEEVYKEHQDKNLVFTKTLEEFVGSLEKPRRIMLMVQAGAATDATIKSLLPLLDIGDILIDGGNTHFPDTMRRNAELADSGINFIGTGVSGGEKGALLGPSMMPGGQKEAYDLVAPIFEQIAAKAPQDGKPCVAYMGANGAGHYVKMVHNGIEYGDMQLIAESYDLLKRILGLSNAEIQAIFEEWNEGELDSYLIEITKEVLKRKDDEGEGYIVDKILDKAGNKGTGKWTSESALDLGVPLPLITESVFARYISTYKDERVKASKVLSGPALDFSGDKKEVIEKIRKALYFSKIMSYAQGFAQLRKASEEFDWDLPYGTIAQIWRAGCIIRAEFLQNITDAFDKDSELENLLLDDYFVDITKRYQEAVRDVVSLAVQAGTPIPTFTSAISYYDSYRSENLPANLIQAQRDYFGAHTYERTDKAGIFHYDWYTED</sequence>
<organism>
    <name type="scientific">Lactococcus lactis subsp. cremoris (strain MG1363)</name>
    <dbReference type="NCBI Taxonomy" id="416870"/>
    <lineage>
        <taxon>Bacteria</taxon>
        <taxon>Bacillati</taxon>
        <taxon>Bacillota</taxon>
        <taxon>Bacilli</taxon>
        <taxon>Lactobacillales</taxon>
        <taxon>Streptococcaceae</taxon>
        <taxon>Lactococcus</taxon>
        <taxon>Lactococcus cremoris subsp. cremoris</taxon>
    </lineage>
</organism>
<keyword id="KW-0002">3D-structure</keyword>
<keyword id="KW-0311">Gluconate utilization</keyword>
<keyword id="KW-0521">NADP</keyword>
<keyword id="KW-0560">Oxidoreductase</keyword>
<keyword id="KW-0570">Pentose shunt</keyword>
<proteinExistence type="evidence at protein level"/>
<gene>
    <name type="primary">gnd</name>
    <name type="ordered locus">llmg_0586</name>
</gene>
<evidence type="ECO:0000250" key="1"/>
<evidence type="ECO:0000269" key="2">
    <source>
    </source>
</evidence>
<evidence type="ECO:0000305" key="3"/>
<evidence type="ECO:0007829" key="4">
    <source>
        <dbReference type="PDB" id="2IZ1"/>
    </source>
</evidence>
<dbReference type="EC" id="1.1.1.44"/>
<dbReference type="EMBL" id="U74322">
    <property type="protein sequence ID" value="AAC12804.1"/>
    <property type="molecule type" value="Genomic_DNA"/>
</dbReference>
<dbReference type="EMBL" id="AM406671">
    <property type="protein sequence ID" value="CAL97186.1"/>
    <property type="molecule type" value="Genomic_DNA"/>
</dbReference>
<dbReference type="RefSeq" id="WP_011834606.1">
    <property type="nucleotide sequence ID" value="NC_009004.1"/>
</dbReference>
<dbReference type="PDB" id="2IYO">
    <property type="method" value="X-ray"/>
    <property type="resolution" value="2.40 A"/>
    <property type="chains" value="A=1-472"/>
</dbReference>
<dbReference type="PDB" id="2IYP">
    <property type="method" value="X-ray"/>
    <property type="resolution" value="2.79 A"/>
    <property type="chains" value="A/B/C=1-472"/>
</dbReference>
<dbReference type="PDB" id="2IZ0">
    <property type="method" value="X-ray"/>
    <property type="resolution" value="2.60 A"/>
    <property type="chains" value="A/B/C=1-472"/>
</dbReference>
<dbReference type="PDB" id="2IZ1">
    <property type="method" value="X-ray"/>
    <property type="resolution" value="2.30 A"/>
    <property type="chains" value="A/B/C=1-472"/>
</dbReference>
<dbReference type="PDBsum" id="2IYO"/>
<dbReference type="PDBsum" id="2IYP"/>
<dbReference type="PDBsum" id="2IZ0"/>
<dbReference type="PDBsum" id="2IZ1"/>
<dbReference type="SMR" id="P96789"/>
<dbReference type="STRING" id="416870.llmg_0586"/>
<dbReference type="KEGG" id="llm:llmg_0586"/>
<dbReference type="eggNOG" id="COG0362">
    <property type="taxonomic scope" value="Bacteria"/>
</dbReference>
<dbReference type="HOGENOM" id="CLU_024540_4_2_9"/>
<dbReference type="OrthoDB" id="9804542at2"/>
<dbReference type="PhylomeDB" id="P96789"/>
<dbReference type="BRENDA" id="1.1.1.44">
    <property type="organism ID" value="2903"/>
</dbReference>
<dbReference type="SABIO-RK" id="P96789"/>
<dbReference type="UniPathway" id="UPA00115">
    <property type="reaction ID" value="UER00410"/>
</dbReference>
<dbReference type="EvolutionaryTrace" id="P96789"/>
<dbReference type="Proteomes" id="UP000000364">
    <property type="component" value="Chromosome"/>
</dbReference>
<dbReference type="GO" id="GO:0050661">
    <property type="term" value="F:NADP binding"/>
    <property type="evidence" value="ECO:0007669"/>
    <property type="project" value="InterPro"/>
</dbReference>
<dbReference type="GO" id="GO:0004616">
    <property type="term" value="F:phosphogluconate dehydrogenase (decarboxylating) activity"/>
    <property type="evidence" value="ECO:0007669"/>
    <property type="project" value="UniProtKB-EC"/>
</dbReference>
<dbReference type="GO" id="GO:0019521">
    <property type="term" value="P:D-gluconate metabolic process"/>
    <property type="evidence" value="ECO:0007669"/>
    <property type="project" value="UniProtKB-KW"/>
</dbReference>
<dbReference type="GO" id="GO:0016054">
    <property type="term" value="P:organic acid catabolic process"/>
    <property type="evidence" value="ECO:0007669"/>
    <property type="project" value="UniProtKB-ARBA"/>
</dbReference>
<dbReference type="GO" id="GO:0006098">
    <property type="term" value="P:pentose-phosphate shunt"/>
    <property type="evidence" value="ECO:0007669"/>
    <property type="project" value="UniProtKB-UniPathway"/>
</dbReference>
<dbReference type="FunFam" id="1.10.1040.10:FF:000002">
    <property type="entry name" value="6-phosphogluconate dehydrogenase, decarboxylating"/>
    <property type="match status" value="1"/>
</dbReference>
<dbReference type="FunFam" id="1.20.5.320:FF:000001">
    <property type="entry name" value="6-phosphogluconate dehydrogenase, decarboxylating"/>
    <property type="match status" value="1"/>
</dbReference>
<dbReference type="FunFam" id="3.40.50.720:FF:000007">
    <property type="entry name" value="6-phosphogluconate dehydrogenase, decarboxylating"/>
    <property type="match status" value="1"/>
</dbReference>
<dbReference type="Gene3D" id="1.20.5.320">
    <property type="entry name" value="6-Phosphogluconate Dehydrogenase, domain 3"/>
    <property type="match status" value="1"/>
</dbReference>
<dbReference type="Gene3D" id="1.10.1040.10">
    <property type="entry name" value="N-(1-d-carboxylethyl)-l-norvaline Dehydrogenase, domain 2"/>
    <property type="match status" value="1"/>
</dbReference>
<dbReference type="Gene3D" id="3.40.50.720">
    <property type="entry name" value="NAD(P)-binding Rossmann-like Domain"/>
    <property type="match status" value="1"/>
</dbReference>
<dbReference type="InterPro" id="IPR008927">
    <property type="entry name" value="6-PGluconate_DH-like_C_sf"/>
</dbReference>
<dbReference type="InterPro" id="IPR013328">
    <property type="entry name" value="6PGD_dom2"/>
</dbReference>
<dbReference type="InterPro" id="IPR006114">
    <property type="entry name" value="6PGDH_C"/>
</dbReference>
<dbReference type="InterPro" id="IPR006113">
    <property type="entry name" value="6PGDH_Gnd/GntZ"/>
</dbReference>
<dbReference type="InterPro" id="IPR006115">
    <property type="entry name" value="6PGDH_NADP-bd"/>
</dbReference>
<dbReference type="InterPro" id="IPR006184">
    <property type="entry name" value="6PGdom_BS"/>
</dbReference>
<dbReference type="InterPro" id="IPR036291">
    <property type="entry name" value="NAD(P)-bd_dom_sf"/>
</dbReference>
<dbReference type="InterPro" id="IPR006183">
    <property type="entry name" value="Pgluconate_DH"/>
</dbReference>
<dbReference type="NCBIfam" id="TIGR00873">
    <property type="entry name" value="gnd"/>
    <property type="match status" value="1"/>
</dbReference>
<dbReference type="NCBIfam" id="NF006765">
    <property type="entry name" value="PRK09287.1"/>
    <property type="match status" value="1"/>
</dbReference>
<dbReference type="PANTHER" id="PTHR11811">
    <property type="entry name" value="6-PHOSPHOGLUCONATE DEHYDROGENASE"/>
    <property type="match status" value="1"/>
</dbReference>
<dbReference type="Pfam" id="PF00393">
    <property type="entry name" value="6PGD"/>
    <property type="match status" value="1"/>
</dbReference>
<dbReference type="Pfam" id="PF03446">
    <property type="entry name" value="NAD_binding_2"/>
    <property type="match status" value="1"/>
</dbReference>
<dbReference type="PIRSF" id="PIRSF000109">
    <property type="entry name" value="6PGD"/>
    <property type="match status" value="1"/>
</dbReference>
<dbReference type="PRINTS" id="PR00076">
    <property type="entry name" value="6PGDHDRGNASE"/>
</dbReference>
<dbReference type="SMART" id="SM01350">
    <property type="entry name" value="6PGD"/>
    <property type="match status" value="1"/>
</dbReference>
<dbReference type="SUPFAM" id="SSF48179">
    <property type="entry name" value="6-phosphogluconate dehydrogenase C-terminal domain-like"/>
    <property type="match status" value="1"/>
</dbReference>
<dbReference type="SUPFAM" id="SSF51735">
    <property type="entry name" value="NAD(P)-binding Rossmann-fold domains"/>
    <property type="match status" value="1"/>
</dbReference>
<dbReference type="PROSITE" id="PS00461">
    <property type="entry name" value="6PGD"/>
    <property type="match status" value="1"/>
</dbReference>
<accession>P96789</accession>
<accession>A2RIU0</accession>
<comment type="function">
    <text evidence="1">Catalyzes the oxidative decarboxylation of 6-phosphogluconate to ribulose 5-phosphate and CO(2), with concomitant reduction of NADP to NADPH.</text>
</comment>
<comment type="catalytic activity">
    <reaction>
        <text>6-phospho-D-gluconate + NADP(+) = D-ribulose 5-phosphate + CO2 + NADPH</text>
        <dbReference type="Rhea" id="RHEA:10116"/>
        <dbReference type="ChEBI" id="CHEBI:16526"/>
        <dbReference type="ChEBI" id="CHEBI:57783"/>
        <dbReference type="ChEBI" id="CHEBI:58121"/>
        <dbReference type="ChEBI" id="CHEBI:58349"/>
        <dbReference type="ChEBI" id="CHEBI:58759"/>
        <dbReference type="EC" id="1.1.1.44"/>
    </reaction>
</comment>
<comment type="pathway">
    <text>Carbohydrate degradation; pentose phosphate pathway; D-ribulose 5-phosphate from D-glucose 6-phosphate (oxidative stage): step 3/3.</text>
</comment>
<comment type="subunit">
    <text evidence="1">Homodimer.</text>
</comment>
<comment type="similarity">
    <text evidence="3">Belongs to the 6-phosphogluconate dehydrogenase family.</text>
</comment>
<reference key="1">
    <citation type="journal article" date="1999" name="Biochem. J.">
        <title>6-phosphogluconate dehydrogenase from Lactococcus lactis: a role for arginine residues in binding substrate and coenzyme.</title>
        <authorList>
            <person name="Tetaud E."/>
            <person name="Hanau S."/>
            <person name="Wells J.M."/>
            <person name="Le Page R.W.F."/>
            <person name="Adams M.J."/>
            <person name="Arkison S."/>
            <person name="Barrett M.P."/>
        </authorList>
    </citation>
    <scope>NUCLEOTIDE SEQUENCE [GENOMIC DNA]</scope>
</reference>
<reference key="2">
    <citation type="journal article" date="2007" name="J. Bacteriol.">
        <title>The complete genome sequence of the lactic acid bacterial paradigm Lactococcus lactis subsp. cremoris MG1363.</title>
        <authorList>
            <person name="Wegmann U."/>
            <person name="O'Connell-Motherway M."/>
            <person name="Zomer A."/>
            <person name="Buist G."/>
            <person name="Shearman C."/>
            <person name="Canchaya C."/>
            <person name="Ventura M."/>
            <person name="Goesmann A."/>
            <person name="Gasson M.J."/>
            <person name="Kuipers O.P."/>
            <person name="van Sinderen D."/>
            <person name="Kok J."/>
        </authorList>
    </citation>
    <scope>NUCLEOTIDE SEQUENCE [LARGE SCALE GENOMIC DNA]</scope>
    <source>
        <strain>MG1363</strain>
    </source>
</reference>
<reference key="3">
    <citation type="journal article" date="2007" name="FEBS J.">
        <title>Crystal structures of a bacterial 6-phosphogluconate dehydrogenase reveal aspects of specificity, mechanism and mode of inhibition by analogues of high-energy reaction intermediates.</title>
        <authorList>
            <person name="Sundaramoorthy R."/>
            <person name="Iulek J."/>
            <person name="Barrett M.P."/>
            <person name="Bidet O."/>
            <person name="Ruda G.F."/>
            <person name="Gilbert I.H."/>
            <person name="Hunter W.N."/>
        </authorList>
    </citation>
    <scope>X-RAY CRYSTALLOGRAPHY (2.3 ANGSTROMS) IN COMPLEXES WITH SUBSTRATE; PRODUCT; INHIBITORS AND NADP</scope>
    <scope>SUBUNIT</scope>
    <scope>ACTIVE SITE</scope>
</reference>